<comment type="function">
    <text evidence="1">Nucleotidase that shows phosphatase activity on nucleoside 5'-monophosphates.</text>
</comment>
<comment type="catalytic activity">
    <reaction evidence="1">
        <text>a ribonucleoside 5'-phosphate + H2O = a ribonucleoside + phosphate</text>
        <dbReference type="Rhea" id="RHEA:12484"/>
        <dbReference type="ChEBI" id="CHEBI:15377"/>
        <dbReference type="ChEBI" id="CHEBI:18254"/>
        <dbReference type="ChEBI" id="CHEBI:43474"/>
        <dbReference type="ChEBI" id="CHEBI:58043"/>
        <dbReference type="EC" id="3.1.3.5"/>
    </reaction>
</comment>
<comment type="cofactor">
    <cofactor evidence="1">
        <name>a divalent metal cation</name>
        <dbReference type="ChEBI" id="CHEBI:60240"/>
    </cofactor>
    <text evidence="1">Binds 1 divalent metal cation per subunit.</text>
</comment>
<comment type="subcellular location">
    <subcellularLocation>
        <location evidence="1">Cytoplasm</location>
    </subcellularLocation>
</comment>
<comment type="similarity">
    <text evidence="1">Belongs to the SurE nucleotidase family.</text>
</comment>
<accession>A7G9Y6</accession>
<sequence>MNILLTNDDGIEAEGINTLAELLSKYHNVTMVAPENQRSASSHSITIYEPIIVKQVKKPYNIEAYSISGTPADCVRVALDKLVPDNIDMVISGINKGLNIGNDILYSGTVSAAIEGAMYKVPSMAVSAQFIKNKKENYKIAAKYALGMLNRLKKEDLKNDVVLNLNIPFCSEEEIKGIKVCKVGNKIFNTRFSEEIDEEGNKVLKLEGDINKDIYEGTDVYYIRNKYVTLTPLHYDLTNFNILEETEQLFLS</sequence>
<protein>
    <recommendedName>
        <fullName evidence="1">5'-nucleotidase SurE</fullName>
        <ecNumber evidence="1">3.1.3.5</ecNumber>
    </recommendedName>
    <alternativeName>
        <fullName evidence="1">Nucleoside 5'-monophosphate phosphohydrolase</fullName>
    </alternativeName>
</protein>
<proteinExistence type="inferred from homology"/>
<reference key="1">
    <citation type="submission" date="2007-06" db="EMBL/GenBank/DDBJ databases">
        <authorList>
            <person name="Brinkac L.M."/>
            <person name="Daugherty S."/>
            <person name="Dodson R.J."/>
            <person name="Madupu R."/>
            <person name="Brown J.L."/>
            <person name="Bruce D."/>
            <person name="Detter C."/>
            <person name="Munk C."/>
            <person name="Smith L.A."/>
            <person name="Smith T.J."/>
            <person name="White O."/>
            <person name="Brettin T.S."/>
        </authorList>
    </citation>
    <scope>NUCLEOTIDE SEQUENCE [LARGE SCALE GENOMIC DNA]</scope>
    <source>
        <strain>Langeland / NCTC 10281 / Type F</strain>
    </source>
</reference>
<name>SURE_CLOBL</name>
<gene>
    <name evidence="1" type="primary">surE</name>
    <name type="ordered locus">CLI_0298</name>
</gene>
<feature type="chain" id="PRO_1000007723" description="5'-nucleotidase SurE">
    <location>
        <begin position="1"/>
        <end position="252"/>
    </location>
</feature>
<feature type="binding site" evidence="1">
    <location>
        <position position="8"/>
    </location>
    <ligand>
        <name>a divalent metal cation</name>
        <dbReference type="ChEBI" id="CHEBI:60240"/>
    </ligand>
</feature>
<feature type="binding site" evidence="1">
    <location>
        <position position="9"/>
    </location>
    <ligand>
        <name>a divalent metal cation</name>
        <dbReference type="ChEBI" id="CHEBI:60240"/>
    </ligand>
</feature>
<feature type="binding site" evidence="1">
    <location>
        <position position="39"/>
    </location>
    <ligand>
        <name>a divalent metal cation</name>
        <dbReference type="ChEBI" id="CHEBI:60240"/>
    </ligand>
</feature>
<feature type="binding site" evidence="1">
    <location>
        <position position="95"/>
    </location>
    <ligand>
        <name>a divalent metal cation</name>
        <dbReference type="ChEBI" id="CHEBI:60240"/>
    </ligand>
</feature>
<organism>
    <name type="scientific">Clostridium botulinum (strain Langeland / NCTC 10281 / Type F)</name>
    <dbReference type="NCBI Taxonomy" id="441772"/>
    <lineage>
        <taxon>Bacteria</taxon>
        <taxon>Bacillati</taxon>
        <taxon>Bacillota</taxon>
        <taxon>Clostridia</taxon>
        <taxon>Eubacteriales</taxon>
        <taxon>Clostridiaceae</taxon>
        <taxon>Clostridium</taxon>
    </lineage>
</organism>
<dbReference type="EC" id="3.1.3.5" evidence="1"/>
<dbReference type="EMBL" id="CP000728">
    <property type="protein sequence ID" value="ABS39851.1"/>
    <property type="molecule type" value="Genomic_DNA"/>
</dbReference>
<dbReference type="RefSeq" id="WP_003399041.1">
    <property type="nucleotide sequence ID" value="NC_009699.1"/>
</dbReference>
<dbReference type="SMR" id="A7G9Y6"/>
<dbReference type="KEGG" id="cbf:CLI_0298"/>
<dbReference type="HOGENOM" id="CLU_045192_1_3_9"/>
<dbReference type="Proteomes" id="UP000002410">
    <property type="component" value="Chromosome"/>
</dbReference>
<dbReference type="GO" id="GO:0005737">
    <property type="term" value="C:cytoplasm"/>
    <property type="evidence" value="ECO:0007669"/>
    <property type="project" value="UniProtKB-SubCell"/>
</dbReference>
<dbReference type="GO" id="GO:0008254">
    <property type="term" value="F:3'-nucleotidase activity"/>
    <property type="evidence" value="ECO:0007669"/>
    <property type="project" value="TreeGrafter"/>
</dbReference>
<dbReference type="GO" id="GO:0008253">
    <property type="term" value="F:5'-nucleotidase activity"/>
    <property type="evidence" value="ECO:0007669"/>
    <property type="project" value="UniProtKB-UniRule"/>
</dbReference>
<dbReference type="GO" id="GO:0004309">
    <property type="term" value="F:exopolyphosphatase activity"/>
    <property type="evidence" value="ECO:0007669"/>
    <property type="project" value="TreeGrafter"/>
</dbReference>
<dbReference type="GO" id="GO:0046872">
    <property type="term" value="F:metal ion binding"/>
    <property type="evidence" value="ECO:0007669"/>
    <property type="project" value="UniProtKB-UniRule"/>
</dbReference>
<dbReference type="GO" id="GO:0000166">
    <property type="term" value="F:nucleotide binding"/>
    <property type="evidence" value="ECO:0007669"/>
    <property type="project" value="UniProtKB-KW"/>
</dbReference>
<dbReference type="FunFam" id="3.40.1210.10:FF:000001">
    <property type="entry name" value="5'/3'-nucleotidase SurE"/>
    <property type="match status" value="1"/>
</dbReference>
<dbReference type="Gene3D" id="3.40.1210.10">
    <property type="entry name" value="Survival protein SurE-like phosphatase/nucleotidase"/>
    <property type="match status" value="1"/>
</dbReference>
<dbReference type="HAMAP" id="MF_00060">
    <property type="entry name" value="SurE"/>
    <property type="match status" value="1"/>
</dbReference>
<dbReference type="InterPro" id="IPR030048">
    <property type="entry name" value="SurE"/>
</dbReference>
<dbReference type="InterPro" id="IPR002828">
    <property type="entry name" value="SurE-like_Pase/nucleotidase"/>
</dbReference>
<dbReference type="InterPro" id="IPR036523">
    <property type="entry name" value="SurE-like_sf"/>
</dbReference>
<dbReference type="NCBIfam" id="NF001490">
    <property type="entry name" value="PRK00346.1-4"/>
    <property type="match status" value="1"/>
</dbReference>
<dbReference type="NCBIfam" id="NF010543">
    <property type="entry name" value="PRK13933.1"/>
    <property type="match status" value="1"/>
</dbReference>
<dbReference type="NCBIfam" id="TIGR00087">
    <property type="entry name" value="surE"/>
    <property type="match status" value="1"/>
</dbReference>
<dbReference type="PANTHER" id="PTHR30457">
    <property type="entry name" value="5'-NUCLEOTIDASE SURE"/>
    <property type="match status" value="1"/>
</dbReference>
<dbReference type="PANTHER" id="PTHR30457:SF12">
    <property type="entry name" value="5'_3'-NUCLEOTIDASE SURE"/>
    <property type="match status" value="1"/>
</dbReference>
<dbReference type="Pfam" id="PF01975">
    <property type="entry name" value="SurE"/>
    <property type="match status" value="1"/>
</dbReference>
<dbReference type="SUPFAM" id="SSF64167">
    <property type="entry name" value="SurE-like"/>
    <property type="match status" value="1"/>
</dbReference>
<evidence type="ECO:0000255" key="1">
    <source>
        <dbReference type="HAMAP-Rule" id="MF_00060"/>
    </source>
</evidence>
<keyword id="KW-0963">Cytoplasm</keyword>
<keyword id="KW-0378">Hydrolase</keyword>
<keyword id="KW-0479">Metal-binding</keyword>
<keyword id="KW-0547">Nucleotide-binding</keyword>